<comment type="function">
    <text evidence="1">Associates with the EF-Tu.GDP complex and induces the exchange of GDP to GTP. It remains bound to the aminoacyl-tRNA.EF-Tu.GTP complex up to the GTP hydrolysis stage on the ribosome.</text>
</comment>
<comment type="subcellular location">
    <subcellularLocation>
        <location evidence="1">Cytoplasm</location>
    </subcellularLocation>
</comment>
<comment type="similarity">
    <text evidence="1">Belongs to the EF-Ts family.</text>
</comment>
<reference key="1">
    <citation type="journal article" date="2009" name="Environ. Microbiol.">
        <title>Contribution of mobile genetic elements to Desulfovibrio vulgaris genome plasticity.</title>
        <authorList>
            <person name="Walker C.B."/>
            <person name="Stolyar S."/>
            <person name="Chivian D."/>
            <person name="Pinel N."/>
            <person name="Gabster J.A."/>
            <person name="Dehal P.S."/>
            <person name="He Z."/>
            <person name="Yang Z.K."/>
            <person name="Yen H.C."/>
            <person name="Zhou J."/>
            <person name="Wall J.D."/>
            <person name="Hazen T.C."/>
            <person name="Arkin A.P."/>
            <person name="Stahl D.A."/>
        </authorList>
    </citation>
    <scope>NUCLEOTIDE SEQUENCE [LARGE SCALE GENOMIC DNA]</scope>
    <source>
        <strain>DP4</strain>
    </source>
</reference>
<proteinExistence type="inferred from homology"/>
<sequence>MAITASMVKELREKTSAGMMDCKKALEECGGEMDKAVDWLRQKGLSKAAKKAGRATSEGLVGCFVSADGKTAGLAELKCETDFVSRNEKFVELAGKLAEQVATKGALDESAQTAINDIIATLGENMGSGRTAQMNVAGEGFIGSYLHSNGKIAVLVEMTCEKAATAAEATFLECAKNVAMQIAASNPAAVSADKVDPALIAREREVYRQKALEEGKPENIVEKIAEGAVKKFFKEACLLEQPYIRDDKTTVAELLKQTSKAVGDNLGVARFVRFQLGEDAAAEEAAE</sequence>
<organism>
    <name type="scientific">Nitratidesulfovibrio vulgaris (strain DP4)</name>
    <name type="common">Desulfovibrio vulgaris</name>
    <dbReference type="NCBI Taxonomy" id="391774"/>
    <lineage>
        <taxon>Bacteria</taxon>
        <taxon>Pseudomonadati</taxon>
        <taxon>Thermodesulfobacteriota</taxon>
        <taxon>Desulfovibrionia</taxon>
        <taxon>Desulfovibrionales</taxon>
        <taxon>Desulfovibrionaceae</taxon>
        <taxon>Nitratidesulfovibrio</taxon>
    </lineage>
</organism>
<evidence type="ECO:0000255" key="1">
    <source>
        <dbReference type="HAMAP-Rule" id="MF_00050"/>
    </source>
</evidence>
<feature type="chain" id="PRO_1000006086" description="Elongation factor Ts">
    <location>
        <begin position="1"/>
        <end position="287"/>
    </location>
</feature>
<feature type="region of interest" description="Involved in Mg(2+) ion dislocation from EF-Tu" evidence="1">
    <location>
        <begin position="81"/>
        <end position="84"/>
    </location>
</feature>
<name>EFTS_NITV4</name>
<keyword id="KW-0963">Cytoplasm</keyword>
<keyword id="KW-0251">Elongation factor</keyword>
<keyword id="KW-0648">Protein biosynthesis</keyword>
<accession>A1VFA9</accession>
<protein>
    <recommendedName>
        <fullName evidence="1">Elongation factor Ts</fullName>
        <shortName evidence="1">EF-Ts</shortName>
    </recommendedName>
</protein>
<dbReference type="EMBL" id="CP000527">
    <property type="protein sequence ID" value="ABM29125.1"/>
    <property type="molecule type" value="Genomic_DNA"/>
</dbReference>
<dbReference type="RefSeq" id="WP_010938172.1">
    <property type="nucleotide sequence ID" value="NC_008751.1"/>
</dbReference>
<dbReference type="SMR" id="A1VFA9"/>
<dbReference type="KEGG" id="dvl:Dvul_2109"/>
<dbReference type="HOGENOM" id="CLU_047155_0_0_7"/>
<dbReference type="Proteomes" id="UP000009173">
    <property type="component" value="Chromosome"/>
</dbReference>
<dbReference type="GO" id="GO:0005737">
    <property type="term" value="C:cytoplasm"/>
    <property type="evidence" value="ECO:0007669"/>
    <property type="project" value="UniProtKB-SubCell"/>
</dbReference>
<dbReference type="GO" id="GO:0003746">
    <property type="term" value="F:translation elongation factor activity"/>
    <property type="evidence" value="ECO:0007669"/>
    <property type="project" value="UniProtKB-UniRule"/>
</dbReference>
<dbReference type="CDD" id="cd14275">
    <property type="entry name" value="UBA_EF-Ts"/>
    <property type="match status" value="1"/>
</dbReference>
<dbReference type="FunFam" id="1.10.286.20:FF:000001">
    <property type="entry name" value="Elongation factor Ts"/>
    <property type="match status" value="1"/>
</dbReference>
<dbReference type="FunFam" id="1.10.8.10:FF:000001">
    <property type="entry name" value="Elongation factor Ts"/>
    <property type="match status" value="1"/>
</dbReference>
<dbReference type="Gene3D" id="1.10.286.20">
    <property type="match status" value="1"/>
</dbReference>
<dbReference type="Gene3D" id="1.10.8.10">
    <property type="entry name" value="DNA helicase RuvA subunit, C-terminal domain"/>
    <property type="match status" value="1"/>
</dbReference>
<dbReference type="Gene3D" id="3.30.479.20">
    <property type="entry name" value="Elongation factor Ts, dimerisation domain"/>
    <property type="match status" value="2"/>
</dbReference>
<dbReference type="HAMAP" id="MF_00050">
    <property type="entry name" value="EF_Ts"/>
    <property type="match status" value="1"/>
</dbReference>
<dbReference type="InterPro" id="IPR036402">
    <property type="entry name" value="EF-Ts_dimer_sf"/>
</dbReference>
<dbReference type="InterPro" id="IPR001816">
    <property type="entry name" value="Transl_elong_EFTs/EF1B"/>
</dbReference>
<dbReference type="InterPro" id="IPR014039">
    <property type="entry name" value="Transl_elong_EFTs/EF1B_dimer"/>
</dbReference>
<dbReference type="InterPro" id="IPR018101">
    <property type="entry name" value="Transl_elong_Ts_CS"/>
</dbReference>
<dbReference type="InterPro" id="IPR009060">
    <property type="entry name" value="UBA-like_sf"/>
</dbReference>
<dbReference type="NCBIfam" id="TIGR00116">
    <property type="entry name" value="tsf"/>
    <property type="match status" value="1"/>
</dbReference>
<dbReference type="PANTHER" id="PTHR11741">
    <property type="entry name" value="ELONGATION FACTOR TS"/>
    <property type="match status" value="1"/>
</dbReference>
<dbReference type="PANTHER" id="PTHR11741:SF0">
    <property type="entry name" value="ELONGATION FACTOR TS, MITOCHONDRIAL"/>
    <property type="match status" value="1"/>
</dbReference>
<dbReference type="Pfam" id="PF00889">
    <property type="entry name" value="EF_TS"/>
    <property type="match status" value="1"/>
</dbReference>
<dbReference type="SUPFAM" id="SSF54713">
    <property type="entry name" value="Elongation factor Ts (EF-Ts), dimerisation domain"/>
    <property type="match status" value="2"/>
</dbReference>
<dbReference type="SUPFAM" id="SSF46934">
    <property type="entry name" value="UBA-like"/>
    <property type="match status" value="1"/>
</dbReference>
<dbReference type="PROSITE" id="PS01126">
    <property type="entry name" value="EF_TS_1"/>
    <property type="match status" value="1"/>
</dbReference>
<dbReference type="PROSITE" id="PS01127">
    <property type="entry name" value="EF_TS_2"/>
    <property type="match status" value="1"/>
</dbReference>
<gene>
    <name evidence="1" type="primary">tsf</name>
    <name type="ordered locus">Dvul_2109</name>
</gene>